<comment type="function">
    <text evidence="2">Catalyzes the formation of N(7)-methylguanine at position 46 (m7G46) in tRNA.</text>
</comment>
<comment type="catalytic activity">
    <reaction evidence="2">
        <text>guanosine(46) in tRNA + S-adenosyl-L-methionine = N(7)-methylguanosine(46) in tRNA + S-adenosyl-L-homocysteine</text>
        <dbReference type="Rhea" id="RHEA:42708"/>
        <dbReference type="Rhea" id="RHEA-COMP:10188"/>
        <dbReference type="Rhea" id="RHEA-COMP:10189"/>
        <dbReference type="ChEBI" id="CHEBI:57856"/>
        <dbReference type="ChEBI" id="CHEBI:59789"/>
        <dbReference type="ChEBI" id="CHEBI:74269"/>
        <dbReference type="ChEBI" id="CHEBI:74480"/>
        <dbReference type="EC" id="2.1.1.33"/>
    </reaction>
</comment>
<comment type="pathway">
    <text evidence="2">tRNA modification; N(7)-methylguanine-tRNA biosynthesis.</text>
</comment>
<comment type="similarity">
    <text evidence="2">Belongs to the class I-like SAM-binding methyltransferase superfamily. TrmB family.</text>
</comment>
<sequence length="255" mass="28721">MSDSDASRPSAIASDGPDAAGKHASGAPWRNFYGRFKGKTLKPNQVRDLDEMLPELSPGAVGWDENPEREPLDLEAQFQGRDVWLEVGFGGGEHLVHQAESNPDVGIIGAEPYVNGVAMLLGKLRKSSAENVRVHAGDARDLMDVLPAQSLSRAFLLYPDPWPKARHHRRRFVTQEHLEPLARVLKPGAIFRVATDIPDYVRQTLEEVPKAGFKWLAEGPEDWRKPWGDWISTRYEQKALREGRTPHYLTFQRQD</sequence>
<keyword id="KW-0489">Methyltransferase</keyword>
<keyword id="KW-1185">Reference proteome</keyword>
<keyword id="KW-0949">S-adenosyl-L-methionine</keyword>
<keyword id="KW-0808">Transferase</keyword>
<keyword id="KW-0819">tRNA processing</keyword>
<evidence type="ECO:0000250" key="1"/>
<evidence type="ECO:0000255" key="2">
    <source>
        <dbReference type="HAMAP-Rule" id="MF_01057"/>
    </source>
</evidence>
<evidence type="ECO:0000256" key="3">
    <source>
        <dbReference type="SAM" id="MobiDB-lite"/>
    </source>
</evidence>
<proteinExistence type="inferred from homology"/>
<dbReference type="EC" id="2.1.1.33" evidence="2"/>
<dbReference type="EMBL" id="CP000377">
    <property type="protein sequence ID" value="ABF62928.1"/>
    <property type="molecule type" value="Genomic_DNA"/>
</dbReference>
<dbReference type="RefSeq" id="WP_011537563.1">
    <property type="nucleotide sequence ID" value="NC_008044.1"/>
</dbReference>
<dbReference type="SMR" id="Q1GK88"/>
<dbReference type="STRING" id="292414.TM1040_0195"/>
<dbReference type="KEGG" id="sit:TM1040_0195"/>
<dbReference type="eggNOG" id="COG0220">
    <property type="taxonomic scope" value="Bacteria"/>
</dbReference>
<dbReference type="HOGENOM" id="CLU_050910_0_3_5"/>
<dbReference type="OrthoDB" id="9802090at2"/>
<dbReference type="UniPathway" id="UPA00989"/>
<dbReference type="Proteomes" id="UP000000636">
    <property type="component" value="Chromosome"/>
</dbReference>
<dbReference type="GO" id="GO:0043527">
    <property type="term" value="C:tRNA methyltransferase complex"/>
    <property type="evidence" value="ECO:0007669"/>
    <property type="project" value="TreeGrafter"/>
</dbReference>
<dbReference type="GO" id="GO:0008176">
    <property type="term" value="F:tRNA (guanine(46)-N7)-methyltransferase activity"/>
    <property type="evidence" value="ECO:0007669"/>
    <property type="project" value="UniProtKB-UniRule"/>
</dbReference>
<dbReference type="CDD" id="cd02440">
    <property type="entry name" value="AdoMet_MTases"/>
    <property type="match status" value="1"/>
</dbReference>
<dbReference type="Gene3D" id="3.40.50.150">
    <property type="entry name" value="Vaccinia Virus protein VP39"/>
    <property type="match status" value="1"/>
</dbReference>
<dbReference type="HAMAP" id="MF_01057">
    <property type="entry name" value="tRNA_methyltr_TrmB"/>
    <property type="match status" value="1"/>
</dbReference>
<dbReference type="InterPro" id="IPR029063">
    <property type="entry name" value="SAM-dependent_MTases_sf"/>
</dbReference>
<dbReference type="InterPro" id="IPR003358">
    <property type="entry name" value="tRNA_(Gua-N-7)_MeTrfase_Trmb"/>
</dbReference>
<dbReference type="InterPro" id="IPR055361">
    <property type="entry name" value="tRNA_methyltr_TrmB_bact"/>
</dbReference>
<dbReference type="NCBIfam" id="TIGR00091">
    <property type="entry name" value="tRNA (guanosine(46)-N7)-methyltransferase TrmB"/>
    <property type="match status" value="1"/>
</dbReference>
<dbReference type="PANTHER" id="PTHR23417">
    <property type="entry name" value="3-DEOXY-D-MANNO-OCTULOSONIC-ACID TRANSFERASE/TRNA GUANINE-N 7 - -METHYLTRANSFERASE"/>
    <property type="match status" value="1"/>
</dbReference>
<dbReference type="PANTHER" id="PTHR23417:SF14">
    <property type="entry name" value="PENTACOTRIPEPTIDE-REPEAT REGION OF PRORP DOMAIN-CONTAINING PROTEIN"/>
    <property type="match status" value="1"/>
</dbReference>
<dbReference type="Pfam" id="PF02390">
    <property type="entry name" value="Methyltransf_4"/>
    <property type="match status" value="1"/>
</dbReference>
<dbReference type="SUPFAM" id="SSF53335">
    <property type="entry name" value="S-adenosyl-L-methionine-dependent methyltransferases"/>
    <property type="match status" value="1"/>
</dbReference>
<dbReference type="PROSITE" id="PS51625">
    <property type="entry name" value="SAM_MT_TRMB"/>
    <property type="match status" value="1"/>
</dbReference>
<name>TRMB_RUEST</name>
<accession>Q1GK88</accession>
<protein>
    <recommendedName>
        <fullName evidence="2">tRNA (guanine-N(7)-)-methyltransferase</fullName>
        <ecNumber evidence="2">2.1.1.33</ecNumber>
    </recommendedName>
    <alternativeName>
        <fullName evidence="2">tRNA (guanine(46)-N(7))-methyltransferase</fullName>
    </alternativeName>
    <alternativeName>
        <fullName evidence="2">tRNA(m7G46)-methyltransferase</fullName>
    </alternativeName>
</protein>
<reference key="1">
    <citation type="submission" date="2006-05" db="EMBL/GenBank/DDBJ databases">
        <title>Complete sequence of chromosome of Silicibacter sp. TM1040.</title>
        <authorList>
            <consortium name="US DOE Joint Genome Institute"/>
            <person name="Copeland A."/>
            <person name="Lucas S."/>
            <person name="Lapidus A."/>
            <person name="Barry K."/>
            <person name="Detter J.C."/>
            <person name="Glavina del Rio T."/>
            <person name="Hammon N."/>
            <person name="Israni S."/>
            <person name="Dalin E."/>
            <person name="Tice H."/>
            <person name="Pitluck S."/>
            <person name="Brettin T."/>
            <person name="Bruce D."/>
            <person name="Han C."/>
            <person name="Tapia R."/>
            <person name="Goodwin L."/>
            <person name="Thompson L.S."/>
            <person name="Gilna P."/>
            <person name="Schmutz J."/>
            <person name="Larimer F."/>
            <person name="Land M."/>
            <person name="Hauser L."/>
            <person name="Kyrpides N."/>
            <person name="Kim E."/>
            <person name="Belas R."/>
            <person name="Moran M.A."/>
            <person name="Buchan A."/>
            <person name="Gonzalez J.M."/>
            <person name="Schell M.A."/>
            <person name="Sun F."/>
            <person name="Richardson P."/>
        </authorList>
    </citation>
    <scope>NUCLEOTIDE SEQUENCE [LARGE SCALE GENOMIC DNA]</scope>
    <source>
        <strain>TM1040</strain>
    </source>
</reference>
<organism>
    <name type="scientific">Ruegeria sp. (strain TM1040)</name>
    <name type="common">Silicibacter sp.</name>
    <dbReference type="NCBI Taxonomy" id="292414"/>
    <lineage>
        <taxon>Bacteria</taxon>
        <taxon>Pseudomonadati</taxon>
        <taxon>Pseudomonadota</taxon>
        <taxon>Alphaproteobacteria</taxon>
        <taxon>Rhodobacterales</taxon>
        <taxon>Roseobacteraceae</taxon>
        <taxon>Ruegeria</taxon>
    </lineage>
</organism>
<feature type="chain" id="PRO_0000288229" description="tRNA (guanine-N(7)-)-methyltransferase">
    <location>
        <begin position="1"/>
        <end position="255"/>
    </location>
</feature>
<feature type="region of interest" description="Disordered" evidence="3">
    <location>
        <begin position="1"/>
        <end position="29"/>
    </location>
</feature>
<feature type="active site" evidence="1">
    <location>
        <position position="160"/>
    </location>
</feature>
<feature type="binding site" evidence="2">
    <location>
        <position position="86"/>
    </location>
    <ligand>
        <name>S-adenosyl-L-methionine</name>
        <dbReference type="ChEBI" id="CHEBI:59789"/>
    </ligand>
</feature>
<feature type="binding site" evidence="2">
    <location>
        <position position="111"/>
    </location>
    <ligand>
        <name>S-adenosyl-L-methionine</name>
        <dbReference type="ChEBI" id="CHEBI:59789"/>
    </ligand>
</feature>
<feature type="binding site" evidence="2">
    <location>
        <position position="138"/>
    </location>
    <ligand>
        <name>S-adenosyl-L-methionine</name>
        <dbReference type="ChEBI" id="CHEBI:59789"/>
    </ligand>
</feature>
<feature type="binding site" evidence="2">
    <location>
        <position position="160"/>
    </location>
    <ligand>
        <name>S-adenosyl-L-methionine</name>
        <dbReference type="ChEBI" id="CHEBI:59789"/>
    </ligand>
</feature>
<feature type="binding site" evidence="2">
    <location>
        <position position="164"/>
    </location>
    <ligand>
        <name>substrate</name>
    </ligand>
</feature>
<feature type="binding site" evidence="2">
    <location>
        <position position="196"/>
    </location>
    <ligand>
        <name>substrate</name>
    </ligand>
</feature>
<feature type="binding site" evidence="2">
    <location>
        <begin position="233"/>
        <end position="236"/>
    </location>
    <ligand>
        <name>substrate</name>
    </ligand>
</feature>
<gene>
    <name evidence="2" type="primary">trmB</name>
    <name type="ordered locus">TM1040_0195</name>
</gene>